<feature type="chain" id="PRO_0000357118" description="Methylthioribulose-1-phosphate dehydratase">
    <location>
        <begin position="1"/>
        <end position="218"/>
    </location>
</feature>
<feature type="binding site" evidence="1">
    <location>
        <position position="107"/>
    </location>
    <ligand>
        <name>Zn(2+)</name>
        <dbReference type="ChEBI" id="CHEBI:29105"/>
    </ligand>
</feature>
<feature type="binding site" evidence="1">
    <location>
        <position position="109"/>
    </location>
    <ligand>
        <name>Zn(2+)</name>
        <dbReference type="ChEBI" id="CHEBI:29105"/>
    </ligand>
</feature>
<accession>Q9PBD5</accession>
<organism>
    <name type="scientific">Xylella fastidiosa (strain 9a5c)</name>
    <dbReference type="NCBI Taxonomy" id="160492"/>
    <lineage>
        <taxon>Bacteria</taxon>
        <taxon>Pseudomonadati</taxon>
        <taxon>Pseudomonadota</taxon>
        <taxon>Gammaproteobacteria</taxon>
        <taxon>Lysobacterales</taxon>
        <taxon>Lysobacteraceae</taxon>
        <taxon>Xylella</taxon>
    </lineage>
</organism>
<comment type="function">
    <text evidence="1">Catalyzes the dehydration of methylthioribulose-1-phosphate (MTRu-1-P) into 2,3-diketo-5-methylthiopentyl-1-phosphate (DK-MTP-1-P).</text>
</comment>
<comment type="catalytic activity">
    <reaction evidence="1">
        <text>5-(methylsulfanyl)-D-ribulose 1-phosphate = 5-methylsulfanyl-2,3-dioxopentyl phosphate + H2O</text>
        <dbReference type="Rhea" id="RHEA:15549"/>
        <dbReference type="ChEBI" id="CHEBI:15377"/>
        <dbReference type="ChEBI" id="CHEBI:58548"/>
        <dbReference type="ChEBI" id="CHEBI:58828"/>
        <dbReference type="EC" id="4.2.1.109"/>
    </reaction>
</comment>
<comment type="cofactor">
    <cofactor evidence="1">
        <name>Zn(2+)</name>
        <dbReference type="ChEBI" id="CHEBI:29105"/>
    </cofactor>
    <text evidence="1">Binds 1 zinc ion per subunit.</text>
</comment>
<comment type="pathway">
    <text evidence="1">Amino-acid biosynthesis; L-methionine biosynthesis via salvage pathway; L-methionine from S-methyl-5-thio-alpha-D-ribose 1-phosphate: step 2/6.</text>
</comment>
<comment type="similarity">
    <text evidence="1">Belongs to the aldolase class II family. MtnB subfamily.</text>
</comment>
<reference key="1">
    <citation type="journal article" date="2000" name="Nature">
        <title>The genome sequence of the plant pathogen Xylella fastidiosa.</title>
        <authorList>
            <person name="Simpson A.J.G."/>
            <person name="Reinach F.C."/>
            <person name="Arruda P."/>
            <person name="Abreu F.A."/>
            <person name="Acencio M."/>
            <person name="Alvarenga R."/>
            <person name="Alves L.M.C."/>
            <person name="Araya J.E."/>
            <person name="Baia G.S."/>
            <person name="Baptista C.S."/>
            <person name="Barros M.H."/>
            <person name="Bonaccorsi E.D."/>
            <person name="Bordin S."/>
            <person name="Bove J.M."/>
            <person name="Briones M.R.S."/>
            <person name="Bueno M.R.P."/>
            <person name="Camargo A.A."/>
            <person name="Camargo L.E.A."/>
            <person name="Carraro D.M."/>
            <person name="Carrer H."/>
            <person name="Colauto N.B."/>
            <person name="Colombo C."/>
            <person name="Costa F.F."/>
            <person name="Costa M.C.R."/>
            <person name="Costa-Neto C.M."/>
            <person name="Coutinho L.L."/>
            <person name="Cristofani M."/>
            <person name="Dias-Neto E."/>
            <person name="Docena C."/>
            <person name="El-Dorry H."/>
            <person name="Facincani A.P."/>
            <person name="Ferreira A.J.S."/>
            <person name="Ferreira V.C.A."/>
            <person name="Ferro J.A."/>
            <person name="Fraga J.S."/>
            <person name="Franca S.C."/>
            <person name="Franco M.C."/>
            <person name="Frohme M."/>
            <person name="Furlan L.R."/>
            <person name="Garnier M."/>
            <person name="Goldman G.H."/>
            <person name="Goldman M.H.S."/>
            <person name="Gomes S.L."/>
            <person name="Gruber A."/>
            <person name="Ho P.L."/>
            <person name="Hoheisel J.D."/>
            <person name="Junqueira M.L."/>
            <person name="Kemper E.L."/>
            <person name="Kitajima J.P."/>
            <person name="Krieger J.E."/>
            <person name="Kuramae E.E."/>
            <person name="Laigret F."/>
            <person name="Lambais M.R."/>
            <person name="Leite L.C.C."/>
            <person name="Lemos E.G.M."/>
            <person name="Lemos M.V.F."/>
            <person name="Lopes S.A."/>
            <person name="Lopes C.R."/>
            <person name="Machado J.A."/>
            <person name="Machado M.A."/>
            <person name="Madeira A.M.B.N."/>
            <person name="Madeira H.M.F."/>
            <person name="Marino C.L."/>
            <person name="Marques M.V."/>
            <person name="Martins E.A.L."/>
            <person name="Martins E.M.F."/>
            <person name="Matsukuma A.Y."/>
            <person name="Menck C.F.M."/>
            <person name="Miracca E.C."/>
            <person name="Miyaki C.Y."/>
            <person name="Monteiro-Vitorello C.B."/>
            <person name="Moon D.H."/>
            <person name="Nagai M.A."/>
            <person name="Nascimento A.L.T.O."/>
            <person name="Netto L.E.S."/>
            <person name="Nhani A. Jr."/>
            <person name="Nobrega F.G."/>
            <person name="Nunes L.R."/>
            <person name="Oliveira M.A."/>
            <person name="de Oliveira M.C."/>
            <person name="de Oliveira R.C."/>
            <person name="Palmieri D.A."/>
            <person name="Paris A."/>
            <person name="Peixoto B.R."/>
            <person name="Pereira G.A.G."/>
            <person name="Pereira H.A. Jr."/>
            <person name="Pesquero J.B."/>
            <person name="Quaggio R.B."/>
            <person name="Roberto P.G."/>
            <person name="Rodrigues V."/>
            <person name="de Rosa A.J.M."/>
            <person name="de Rosa V.E. Jr."/>
            <person name="de Sa R.G."/>
            <person name="Santelli R.V."/>
            <person name="Sawasaki H.E."/>
            <person name="da Silva A.C.R."/>
            <person name="da Silva A.M."/>
            <person name="da Silva F.R."/>
            <person name="Silva W.A. Jr."/>
            <person name="da Silveira J.F."/>
            <person name="Silvestri M.L.Z."/>
            <person name="Siqueira W.J."/>
            <person name="de Souza A.A."/>
            <person name="de Souza A.P."/>
            <person name="Terenzi M.F."/>
            <person name="Truffi D."/>
            <person name="Tsai S.M."/>
            <person name="Tsuhako M.H."/>
            <person name="Vallada H."/>
            <person name="Van Sluys M.A."/>
            <person name="Verjovski-Almeida S."/>
            <person name="Vettore A.L."/>
            <person name="Zago M.A."/>
            <person name="Zatz M."/>
            <person name="Meidanis J."/>
            <person name="Setubal J.C."/>
        </authorList>
    </citation>
    <scope>NUCLEOTIDE SEQUENCE [LARGE SCALE GENOMIC DNA]</scope>
    <source>
        <strain>9a5c</strain>
    </source>
</reference>
<keyword id="KW-0028">Amino-acid biosynthesis</keyword>
<keyword id="KW-0456">Lyase</keyword>
<keyword id="KW-0479">Metal-binding</keyword>
<keyword id="KW-0486">Methionine biosynthesis</keyword>
<keyword id="KW-0862">Zinc</keyword>
<gene>
    <name evidence="1" type="primary">mtnB</name>
    <name type="ordered locus">XF_2209</name>
</gene>
<name>MTNB_XYLFA</name>
<evidence type="ECO:0000255" key="1">
    <source>
        <dbReference type="HAMAP-Rule" id="MF_01677"/>
    </source>
</evidence>
<sequence>MNATSTPSLPYDANRLRELAHLLIGTIGEFAQAGWTPATSSNFSHRLDEHHVAITVSGRDKRCLTEEDIMAVDLEGNAVGHPHTPSAETLLHTQLYRRFPEIGCVLHTHSLTQTVASRVYAGAGHISLKDYELLKAFEGHSTHETTLDVPVFCNTQNMNILAAQVDTLLDKQRMWGYLINGHGMYTWGNTLADARRHLEALEFLLHCELNLLKLRGYL</sequence>
<proteinExistence type="inferred from homology"/>
<dbReference type="EC" id="4.2.1.109" evidence="1"/>
<dbReference type="EMBL" id="AE003849">
    <property type="protein sequence ID" value="AAF85008.1"/>
    <property type="molecule type" value="Genomic_DNA"/>
</dbReference>
<dbReference type="PIR" id="E82587">
    <property type="entry name" value="E82587"/>
</dbReference>
<dbReference type="RefSeq" id="WP_010894657.1">
    <property type="nucleotide sequence ID" value="NC_002488.3"/>
</dbReference>
<dbReference type="SMR" id="Q9PBD5"/>
<dbReference type="STRING" id="160492.XF_2209"/>
<dbReference type="KEGG" id="xfa:XF_2209"/>
<dbReference type="PATRIC" id="fig|160492.11.peg.2352"/>
<dbReference type="eggNOG" id="COG0235">
    <property type="taxonomic scope" value="Bacteria"/>
</dbReference>
<dbReference type="HOGENOM" id="CLU_006033_4_1_6"/>
<dbReference type="UniPathway" id="UPA00904">
    <property type="reaction ID" value="UER00875"/>
</dbReference>
<dbReference type="Proteomes" id="UP000000812">
    <property type="component" value="Chromosome"/>
</dbReference>
<dbReference type="GO" id="GO:0005737">
    <property type="term" value="C:cytoplasm"/>
    <property type="evidence" value="ECO:0007669"/>
    <property type="project" value="InterPro"/>
</dbReference>
<dbReference type="GO" id="GO:0046570">
    <property type="term" value="F:methylthioribulose 1-phosphate dehydratase activity"/>
    <property type="evidence" value="ECO:0007669"/>
    <property type="project" value="UniProtKB-UniRule"/>
</dbReference>
<dbReference type="GO" id="GO:0008270">
    <property type="term" value="F:zinc ion binding"/>
    <property type="evidence" value="ECO:0007669"/>
    <property type="project" value="UniProtKB-UniRule"/>
</dbReference>
<dbReference type="GO" id="GO:0019509">
    <property type="term" value="P:L-methionine salvage from methylthioadenosine"/>
    <property type="evidence" value="ECO:0007669"/>
    <property type="project" value="UniProtKB-UniRule"/>
</dbReference>
<dbReference type="GO" id="GO:0005996">
    <property type="term" value="P:monosaccharide metabolic process"/>
    <property type="evidence" value="ECO:0007669"/>
    <property type="project" value="UniProtKB-ARBA"/>
</dbReference>
<dbReference type="Gene3D" id="3.40.225.10">
    <property type="entry name" value="Class II aldolase/adducin N-terminal domain"/>
    <property type="match status" value="1"/>
</dbReference>
<dbReference type="HAMAP" id="MF_01677">
    <property type="entry name" value="Salvage_MtnB"/>
    <property type="match status" value="1"/>
</dbReference>
<dbReference type="InterPro" id="IPR001303">
    <property type="entry name" value="Aldolase_II/adducin_N"/>
</dbReference>
<dbReference type="InterPro" id="IPR036409">
    <property type="entry name" value="Aldolase_II/adducin_N_sf"/>
</dbReference>
<dbReference type="InterPro" id="IPR017714">
    <property type="entry name" value="MethylthioRu-1-P_deHdtase_MtnB"/>
</dbReference>
<dbReference type="NCBIfam" id="NF006672">
    <property type="entry name" value="PRK09220.1"/>
    <property type="match status" value="1"/>
</dbReference>
<dbReference type="NCBIfam" id="TIGR03328">
    <property type="entry name" value="salvage_mtnB"/>
    <property type="match status" value="1"/>
</dbReference>
<dbReference type="PANTHER" id="PTHR10640">
    <property type="entry name" value="METHYLTHIORIBULOSE-1-PHOSPHATE DEHYDRATASE"/>
    <property type="match status" value="1"/>
</dbReference>
<dbReference type="PANTHER" id="PTHR10640:SF7">
    <property type="entry name" value="METHYLTHIORIBULOSE-1-PHOSPHATE DEHYDRATASE"/>
    <property type="match status" value="1"/>
</dbReference>
<dbReference type="Pfam" id="PF00596">
    <property type="entry name" value="Aldolase_II"/>
    <property type="match status" value="1"/>
</dbReference>
<dbReference type="SMART" id="SM01007">
    <property type="entry name" value="Aldolase_II"/>
    <property type="match status" value="1"/>
</dbReference>
<dbReference type="SUPFAM" id="SSF53639">
    <property type="entry name" value="AraD/HMP-PK domain-like"/>
    <property type="match status" value="1"/>
</dbReference>
<protein>
    <recommendedName>
        <fullName evidence="1">Methylthioribulose-1-phosphate dehydratase</fullName>
        <shortName evidence="1">MTRu-1-P dehydratase</shortName>
        <ecNumber evidence="1">4.2.1.109</ecNumber>
    </recommendedName>
</protein>